<sequence length="362" mass="38881">MERIVVTLGERSYPITIASGLFNEPASFLPLKSGEQVMLVTNETLAPLYLDKVRGVLEQAGVNVDSVILPDGEQYKSLAVLDTVFTALLQKPHGRDTTLVALGGGVVGDLTGFAAASYQRGVRFIQVPTTLLSQVDSSVGGKTAVNHPLGKNMIGAFYQPASVVVDLDCLKTLPPRELASGLAEVIKYGIILDGAFFNWLEENLDALLRLDGPAMAYCIRRCCELKAEVVAADERETGLRALLNLGHTFGHAIEAEMGYGNWLHGEAVAAGMVMAARTSERLGQFSSAETQRIITLLKRAGLPVNGPREMSAQAYLPHMLRDKKVLAGEMRLILPLAIGKSEVRSGVSHELVLNAIADCQSA</sequence>
<organism>
    <name type="scientific">Escherichia coli (strain K12 / DH10B)</name>
    <dbReference type="NCBI Taxonomy" id="316385"/>
    <lineage>
        <taxon>Bacteria</taxon>
        <taxon>Pseudomonadati</taxon>
        <taxon>Pseudomonadota</taxon>
        <taxon>Gammaproteobacteria</taxon>
        <taxon>Enterobacterales</taxon>
        <taxon>Enterobacteriaceae</taxon>
        <taxon>Escherichia</taxon>
    </lineage>
</organism>
<gene>
    <name evidence="1" type="primary">aroB</name>
    <name type="ordered locus">ECDH10B_3564</name>
</gene>
<reference key="1">
    <citation type="journal article" date="2008" name="J. Bacteriol.">
        <title>The complete genome sequence of Escherichia coli DH10B: insights into the biology of a laboratory workhorse.</title>
        <authorList>
            <person name="Durfee T."/>
            <person name="Nelson R."/>
            <person name="Baldwin S."/>
            <person name="Plunkett G. III"/>
            <person name="Burland V."/>
            <person name="Mau B."/>
            <person name="Petrosino J.F."/>
            <person name="Qin X."/>
            <person name="Muzny D.M."/>
            <person name="Ayele M."/>
            <person name="Gibbs R.A."/>
            <person name="Csorgo B."/>
            <person name="Posfai G."/>
            <person name="Weinstock G.M."/>
            <person name="Blattner F.R."/>
        </authorList>
    </citation>
    <scope>NUCLEOTIDE SEQUENCE [LARGE SCALE GENOMIC DNA]</scope>
    <source>
        <strain>K12 / DH10B</strain>
    </source>
</reference>
<proteinExistence type="inferred from homology"/>
<dbReference type="EC" id="4.2.3.4" evidence="1"/>
<dbReference type="EMBL" id="CP000948">
    <property type="protein sequence ID" value="ACB04448.1"/>
    <property type="molecule type" value="Genomic_DNA"/>
</dbReference>
<dbReference type="RefSeq" id="WP_000439848.1">
    <property type="nucleotide sequence ID" value="NC_010473.1"/>
</dbReference>
<dbReference type="SMR" id="B1X736"/>
<dbReference type="KEGG" id="ecd:ECDH10B_3564"/>
<dbReference type="HOGENOM" id="CLU_001201_0_2_6"/>
<dbReference type="UniPathway" id="UPA00053">
    <property type="reaction ID" value="UER00085"/>
</dbReference>
<dbReference type="GO" id="GO:0005737">
    <property type="term" value="C:cytoplasm"/>
    <property type="evidence" value="ECO:0007669"/>
    <property type="project" value="UniProtKB-SubCell"/>
</dbReference>
<dbReference type="GO" id="GO:0003856">
    <property type="term" value="F:3-dehydroquinate synthase activity"/>
    <property type="evidence" value="ECO:0007669"/>
    <property type="project" value="UniProtKB-UniRule"/>
</dbReference>
<dbReference type="GO" id="GO:0046872">
    <property type="term" value="F:metal ion binding"/>
    <property type="evidence" value="ECO:0007669"/>
    <property type="project" value="UniProtKB-KW"/>
</dbReference>
<dbReference type="GO" id="GO:0000166">
    <property type="term" value="F:nucleotide binding"/>
    <property type="evidence" value="ECO:0007669"/>
    <property type="project" value="UniProtKB-KW"/>
</dbReference>
<dbReference type="GO" id="GO:0008652">
    <property type="term" value="P:amino acid biosynthetic process"/>
    <property type="evidence" value="ECO:0007669"/>
    <property type="project" value="UniProtKB-KW"/>
</dbReference>
<dbReference type="GO" id="GO:0009073">
    <property type="term" value="P:aromatic amino acid family biosynthetic process"/>
    <property type="evidence" value="ECO:0007669"/>
    <property type="project" value="UniProtKB-KW"/>
</dbReference>
<dbReference type="GO" id="GO:0009423">
    <property type="term" value="P:chorismate biosynthetic process"/>
    <property type="evidence" value="ECO:0007669"/>
    <property type="project" value="UniProtKB-UniRule"/>
</dbReference>
<dbReference type="CDD" id="cd08195">
    <property type="entry name" value="DHQS"/>
    <property type="match status" value="1"/>
</dbReference>
<dbReference type="FunFam" id="1.20.1090.10:FF:000002">
    <property type="entry name" value="3-dehydroquinate synthase"/>
    <property type="match status" value="1"/>
</dbReference>
<dbReference type="FunFam" id="3.40.50.1970:FF:000001">
    <property type="entry name" value="3-dehydroquinate synthase"/>
    <property type="match status" value="1"/>
</dbReference>
<dbReference type="Gene3D" id="3.40.50.1970">
    <property type="match status" value="1"/>
</dbReference>
<dbReference type="Gene3D" id="1.20.1090.10">
    <property type="entry name" value="Dehydroquinate synthase-like - alpha domain"/>
    <property type="match status" value="1"/>
</dbReference>
<dbReference type="HAMAP" id="MF_00110">
    <property type="entry name" value="DHQ_synthase"/>
    <property type="match status" value="1"/>
</dbReference>
<dbReference type="InterPro" id="IPR050071">
    <property type="entry name" value="Dehydroquinate_synthase"/>
</dbReference>
<dbReference type="InterPro" id="IPR016037">
    <property type="entry name" value="DHQ_synth_AroB"/>
</dbReference>
<dbReference type="InterPro" id="IPR030963">
    <property type="entry name" value="DHQ_synth_fam"/>
</dbReference>
<dbReference type="InterPro" id="IPR030960">
    <property type="entry name" value="DHQS/DOIS_N"/>
</dbReference>
<dbReference type="InterPro" id="IPR056179">
    <property type="entry name" value="DHQS_C"/>
</dbReference>
<dbReference type="NCBIfam" id="TIGR01357">
    <property type="entry name" value="aroB"/>
    <property type="match status" value="1"/>
</dbReference>
<dbReference type="PANTHER" id="PTHR43622">
    <property type="entry name" value="3-DEHYDROQUINATE SYNTHASE"/>
    <property type="match status" value="1"/>
</dbReference>
<dbReference type="PANTHER" id="PTHR43622:SF7">
    <property type="entry name" value="3-DEHYDROQUINATE SYNTHASE, CHLOROPLASTIC"/>
    <property type="match status" value="1"/>
</dbReference>
<dbReference type="Pfam" id="PF01761">
    <property type="entry name" value="DHQ_synthase"/>
    <property type="match status" value="1"/>
</dbReference>
<dbReference type="Pfam" id="PF24621">
    <property type="entry name" value="DHQS_C"/>
    <property type="match status" value="1"/>
</dbReference>
<dbReference type="PIRSF" id="PIRSF001455">
    <property type="entry name" value="DHQ_synth"/>
    <property type="match status" value="1"/>
</dbReference>
<dbReference type="SUPFAM" id="SSF56796">
    <property type="entry name" value="Dehydroquinate synthase-like"/>
    <property type="match status" value="1"/>
</dbReference>
<protein>
    <recommendedName>
        <fullName evidence="1">3-dehydroquinate synthase</fullName>
        <shortName evidence="1">DHQS</shortName>
        <ecNumber evidence="1">4.2.3.4</ecNumber>
    </recommendedName>
</protein>
<name>AROB_ECODH</name>
<evidence type="ECO:0000255" key="1">
    <source>
        <dbReference type="HAMAP-Rule" id="MF_00110"/>
    </source>
</evidence>
<feature type="chain" id="PRO_1000094507" description="3-dehydroquinate synthase">
    <location>
        <begin position="1"/>
        <end position="362"/>
    </location>
</feature>
<feature type="binding site" evidence="1">
    <location>
        <begin position="71"/>
        <end position="76"/>
    </location>
    <ligand>
        <name>NAD(+)</name>
        <dbReference type="ChEBI" id="CHEBI:57540"/>
    </ligand>
</feature>
<feature type="binding site" evidence="1">
    <location>
        <begin position="105"/>
        <end position="109"/>
    </location>
    <ligand>
        <name>NAD(+)</name>
        <dbReference type="ChEBI" id="CHEBI:57540"/>
    </ligand>
</feature>
<feature type="binding site" evidence="1">
    <location>
        <begin position="129"/>
        <end position="130"/>
    </location>
    <ligand>
        <name>NAD(+)</name>
        <dbReference type="ChEBI" id="CHEBI:57540"/>
    </ligand>
</feature>
<feature type="binding site" evidence="1">
    <location>
        <position position="142"/>
    </location>
    <ligand>
        <name>NAD(+)</name>
        <dbReference type="ChEBI" id="CHEBI:57540"/>
    </ligand>
</feature>
<feature type="binding site" evidence="1">
    <location>
        <position position="151"/>
    </location>
    <ligand>
        <name>NAD(+)</name>
        <dbReference type="ChEBI" id="CHEBI:57540"/>
    </ligand>
</feature>
<feature type="binding site" evidence="1">
    <location>
        <begin position="169"/>
        <end position="172"/>
    </location>
    <ligand>
        <name>NAD(+)</name>
        <dbReference type="ChEBI" id="CHEBI:57540"/>
    </ligand>
</feature>
<feature type="binding site" evidence="1">
    <location>
        <position position="184"/>
    </location>
    <ligand>
        <name>Zn(2+)</name>
        <dbReference type="ChEBI" id="CHEBI:29105"/>
    </ligand>
</feature>
<feature type="binding site" evidence="1">
    <location>
        <position position="247"/>
    </location>
    <ligand>
        <name>Zn(2+)</name>
        <dbReference type="ChEBI" id="CHEBI:29105"/>
    </ligand>
</feature>
<feature type="binding site" evidence="1">
    <location>
        <position position="264"/>
    </location>
    <ligand>
        <name>Zn(2+)</name>
        <dbReference type="ChEBI" id="CHEBI:29105"/>
    </ligand>
</feature>
<comment type="function">
    <text evidence="1">Catalyzes the conversion of 3-deoxy-D-arabino-heptulosonate 7-phosphate (DAHP) to dehydroquinate (DHQ).</text>
</comment>
<comment type="catalytic activity">
    <reaction evidence="1">
        <text>7-phospho-2-dehydro-3-deoxy-D-arabino-heptonate = 3-dehydroquinate + phosphate</text>
        <dbReference type="Rhea" id="RHEA:21968"/>
        <dbReference type="ChEBI" id="CHEBI:32364"/>
        <dbReference type="ChEBI" id="CHEBI:43474"/>
        <dbReference type="ChEBI" id="CHEBI:58394"/>
        <dbReference type="EC" id="4.2.3.4"/>
    </reaction>
</comment>
<comment type="cofactor">
    <cofactor evidence="1">
        <name>Co(2+)</name>
        <dbReference type="ChEBI" id="CHEBI:48828"/>
    </cofactor>
    <cofactor evidence="1">
        <name>Zn(2+)</name>
        <dbReference type="ChEBI" id="CHEBI:29105"/>
    </cofactor>
    <text evidence="1">Binds 1 divalent metal cation per subunit. Can use either Co(2+) or Zn(2+).</text>
</comment>
<comment type="cofactor">
    <cofactor evidence="1">
        <name>NAD(+)</name>
        <dbReference type="ChEBI" id="CHEBI:57540"/>
    </cofactor>
</comment>
<comment type="pathway">
    <text evidence="1">Metabolic intermediate biosynthesis; chorismate biosynthesis; chorismate from D-erythrose 4-phosphate and phosphoenolpyruvate: step 2/7.</text>
</comment>
<comment type="subcellular location">
    <subcellularLocation>
        <location evidence="1">Cytoplasm</location>
    </subcellularLocation>
</comment>
<comment type="similarity">
    <text evidence="1">Belongs to the sugar phosphate cyclases superfamily. Dehydroquinate synthase family.</text>
</comment>
<accession>B1X736</accession>
<keyword id="KW-0028">Amino-acid biosynthesis</keyword>
<keyword id="KW-0057">Aromatic amino acid biosynthesis</keyword>
<keyword id="KW-0170">Cobalt</keyword>
<keyword id="KW-0963">Cytoplasm</keyword>
<keyword id="KW-0456">Lyase</keyword>
<keyword id="KW-0479">Metal-binding</keyword>
<keyword id="KW-0520">NAD</keyword>
<keyword id="KW-0547">Nucleotide-binding</keyword>
<keyword id="KW-0862">Zinc</keyword>